<sequence length="409" mass="46012">MSDVKKAVLAYSGGLDTSVILKWLQDTYQCEVVTFTADLGQGEELEPARQKALKFGIKPDNIFIDDLREEFVRDFVFPMFRCNTVYEGEYLLGTSIARPLIAKRQIEIARATGADAVSHGATGKGNDQVRFELGYYALMPGVKVIAPWREWDLLSREKLLAYAEKHGIPIEMKHKQGGSPYSMDANLLHISFEGRHLENPAAEAEESMWRWTVSPEAAPDAAEYLDLEFERGDLVAINGTRMKAHELLAKLNELGGKHGIGRLDLVENRYVGMKSRGCYETPGGTILLRAHRAIESVTLDREVAHLKDDLMPRYASLIYNGYWWSPERRALQALIDNTQESVNGWVRVKLYKGNVIVTGRDSKTDSLFDPTIATFEDDQGAYNQKDAHGFIRLNALRMRIAANAQTKRG</sequence>
<feature type="chain" id="PRO_0000148563" description="Argininosuccinate synthase">
    <location>
        <begin position="1"/>
        <end position="409"/>
    </location>
</feature>
<feature type="binding site" evidence="1">
    <location>
        <begin position="10"/>
        <end position="18"/>
    </location>
    <ligand>
        <name>ATP</name>
        <dbReference type="ChEBI" id="CHEBI:30616"/>
    </ligand>
</feature>
<feature type="binding site" evidence="1">
    <location>
        <position position="37"/>
    </location>
    <ligand>
        <name>ATP</name>
        <dbReference type="ChEBI" id="CHEBI:30616"/>
    </ligand>
</feature>
<feature type="binding site" evidence="1">
    <location>
        <position position="90"/>
    </location>
    <ligand>
        <name>L-citrulline</name>
        <dbReference type="ChEBI" id="CHEBI:57743"/>
    </ligand>
</feature>
<feature type="binding site" evidence="1">
    <location>
        <position position="95"/>
    </location>
    <ligand>
        <name>L-citrulline</name>
        <dbReference type="ChEBI" id="CHEBI:57743"/>
    </ligand>
</feature>
<feature type="binding site" evidence="1">
    <location>
        <position position="120"/>
    </location>
    <ligand>
        <name>ATP</name>
        <dbReference type="ChEBI" id="CHEBI:30616"/>
    </ligand>
</feature>
<feature type="binding site" evidence="1">
    <location>
        <position position="122"/>
    </location>
    <ligand>
        <name>L-aspartate</name>
        <dbReference type="ChEBI" id="CHEBI:29991"/>
    </ligand>
</feature>
<feature type="binding site" evidence="1">
    <location>
        <position position="126"/>
    </location>
    <ligand>
        <name>L-aspartate</name>
        <dbReference type="ChEBI" id="CHEBI:29991"/>
    </ligand>
</feature>
<feature type="binding site" evidence="1">
    <location>
        <position position="126"/>
    </location>
    <ligand>
        <name>L-citrulline</name>
        <dbReference type="ChEBI" id="CHEBI:57743"/>
    </ligand>
</feature>
<feature type="binding site" evidence="1">
    <location>
        <position position="127"/>
    </location>
    <ligand>
        <name>L-aspartate</name>
        <dbReference type="ChEBI" id="CHEBI:29991"/>
    </ligand>
</feature>
<feature type="binding site" evidence="1">
    <location>
        <position position="130"/>
    </location>
    <ligand>
        <name>L-citrulline</name>
        <dbReference type="ChEBI" id="CHEBI:57743"/>
    </ligand>
</feature>
<feature type="binding site" evidence="1">
    <location>
        <position position="182"/>
    </location>
    <ligand>
        <name>L-citrulline</name>
        <dbReference type="ChEBI" id="CHEBI:57743"/>
    </ligand>
</feature>
<feature type="binding site" evidence="1">
    <location>
        <position position="191"/>
    </location>
    <ligand>
        <name>L-citrulline</name>
        <dbReference type="ChEBI" id="CHEBI:57743"/>
    </ligand>
</feature>
<feature type="binding site" evidence="1">
    <location>
        <position position="267"/>
    </location>
    <ligand>
        <name>L-citrulline</name>
        <dbReference type="ChEBI" id="CHEBI:57743"/>
    </ligand>
</feature>
<feature type="binding site" evidence="1">
    <location>
        <position position="279"/>
    </location>
    <ligand>
        <name>L-citrulline</name>
        <dbReference type="ChEBI" id="CHEBI:57743"/>
    </ligand>
</feature>
<dbReference type="EC" id="6.3.4.5" evidence="1"/>
<dbReference type="EMBL" id="CR555306">
    <property type="protein sequence ID" value="CAI09017.1"/>
    <property type="molecule type" value="Genomic_DNA"/>
</dbReference>
<dbReference type="RefSeq" id="WP_011238698.1">
    <property type="nucleotide sequence ID" value="NC_006513.1"/>
</dbReference>
<dbReference type="SMR" id="Q5P0Z7"/>
<dbReference type="STRING" id="76114.ebA5097"/>
<dbReference type="KEGG" id="eba:ebA5097"/>
<dbReference type="eggNOG" id="COG0137">
    <property type="taxonomic scope" value="Bacteria"/>
</dbReference>
<dbReference type="HOGENOM" id="CLU_032784_4_2_4"/>
<dbReference type="OrthoDB" id="9801641at2"/>
<dbReference type="UniPathway" id="UPA00068">
    <property type="reaction ID" value="UER00113"/>
</dbReference>
<dbReference type="Proteomes" id="UP000006552">
    <property type="component" value="Chromosome"/>
</dbReference>
<dbReference type="GO" id="GO:0005737">
    <property type="term" value="C:cytoplasm"/>
    <property type="evidence" value="ECO:0007669"/>
    <property type="project" value="UniProtKB-SubCell"/>
</dbReference>
<dbReference type="GO" id="GO:0004055">
    <property type="term" value="F:argininosuccinate synthase activity"/>
    <property type="evidence" value="ECO:0007669"/>
    <property type="project" value="UniProtKB-UniRule"/>
</dbReference>
<dbReference type="GO" id="GO:0005524">
    <property type="term" value="F:ATP binding"/>
    <property type="evidence" value="ECO:0007669"/>
    <property type="project" value="UniProtKB-UniRule"/>
</dbReference>
<dbReference type="GO" id="GO:0000053">
    <property type="term" value="P:argininosuccinate metabolic process"/>
    <property type="evidence" value="ECO:0007669"/>
    <property type="project" value="TreeGrafter"/>
</dbReference>
<dbReference type="GO" id="GO:0006526">
    <property type="term" value="P:L-arginine biosynthetic process"/>
    <property type="evidence" value="ECO:0007669"/>
    <property type="project" value="UniProtKB-UniRule"/>
</dbReference>
<dbReference type="GO" id="GO:0000050">
    <property type="term" value="P:urea cycle"/>
    <property type="evidence" value="ECO:0007669"/>
    <property type="project" value="TreeGrafter"/>
</dbReference>
<dbReference type="CDD" id="cd01999">
    <property type="entry name" value="ASS"/>
    <property type="match status" value="1"/>
</dbReference>
<dbReference type="FunFam" id="3.40.50.620:FF:000019">
    <property type="entry name" value="Argininosuccinate synthase"/>
    <property type="match status" value="1"/>
</dbReference>
<dbReference type="FunFam" id="3.90.1260.10:FF:000007">
    <property type="entry name" value="Argininosuccinate synthase"/>
    <property type="match status" value="1"/>
</dbReference>
<dbReference type="Gene3D" id="3.90.1260.10">
    <property type="entry name" value="Argininosuccinate synthetase, chain A, domain 2"/>
    <property type="match status" value="1"/>
</dbReference>
<dbReference type="Gene3D" id="3.40.50.620">
    <property type="entry name" value="HUPs"/>
    <property type="match status" value="1"/>
</dbReference>
<dbReference type="Gene3D" id="1.20.5.470">
    <property type="entry name" value="Single helix bin"/>
    <property type="match status" value="1"/>
</dbReference>
<dbReference type="HAMAP" id="MF_00005">
    <property type="entry name" value="Arg_succ_synth_type1"/>
    <property type="match status" value="1"/>
</dbReference>
<dbReference type="InterPro" id="IPR048268">
    <property type="entry name" value="Arginosuc_syn_C"/>
</dbReference>
<dbReference type="InterPro" id="IPR048267">
    <property type="entry name" value="Arginosuc_syn_N"/>
</dbReference>
<dbReference type="InterPro" id="IPR001518">
    <property type="entry name" value="Arginosuc_synth"/>
</dbReference>
<dbReference type="InterPro" id="IPR018223">
    <property type="entry name" value="Arginosuc_synth_CS"/>
</dbReference>
<dbReference type="InterPro" id="IPR023434">
    <property type="entry name" value="Arginosuc_synth_type_1_subfam"/>
</dbReference>
<dbReference type="InterPro" id="IPR024074">
    <property type="entry name" value="AS_cat/multimer_dom_body"/>
</dbReference>
<dbReference type="InterPro" id="IPR014729">
    <property type="entry name" value="Rossmann-like_a/b/a_fold"/>
</dbReference>
<dbReference type="NCBIfam" id="TIGR00032">
    <property type="entry name" value="argG"/>
    <property type="match status" value="1"/>
</dbReference>
<dbReference type="NCBIfam" id="NF001770">
    <property type="entry name" value="PRK00509.1"/>
    <property type="match status" value="1"/>
</dbReference>
<dbReference type="PANTHER" id="PTHR11587">
    <property type="entry name" value="ARGININOSUCCINATE SYNTHASE"/>
    <property type="match status" value="1"/>
</dbReference>
<dbReference type="PANTHER" id="PTHR11587:SF2">
    <property type="entry name" value="ARGININOSUCCINATE SYNTHASE"/>
    <property type="match status" value="1"/>
</dbReference>
<dbReference type="Pfam" id="PF20979">
    <property type="entry name" value="Arginosuc_syn_C"/>
    <property type="match status" value="1"/>
</dbReference>
<dbReference type="Pfam" id="PF00764">
    <property type="entry name" value="Arginosuc_synth"/>
    <property type="match status" value="1"/>
</dbReference>
<dbReference type="SUPFAM" id="SSF52402">
    <property type="entry name" value="Adenine nucleotide alpha hydrolases-like"/>
    <property type="match status" value="1"/>
</dbReference>
<dbReference type="SUPFAM" id="SSF69864">
    <property type="entry name" value="Argininosuccinate synthetase, C-terminal domain"/>
    <property type="match status" value="1"/>
</dbReference>
<dbReference type="PROSITE" id="PS00564">
    <property type="entry name" value="ARGININOSUCCIN_SYN_1"/>
    <property type="match status" value="1"/>
</dbReference>
<dbReference type="PROSITE" id="PS00565">
    <property type="entry name" value="ARGININOSUCCIN_SYN_2"/>
    <property type="match status" value="1"/>
</dbReference>
<gene>
    <name evidence="1" type="primary">argG</name>
    <name type="ordered locus">AZOSEA28920</name>
    <name type="ORF">ebA5097</name>
</gene>
<name>ASSY_AROAE</name>
<comment type="catalytic activity">
    <reaction evidence="1">
        <text>L-citrulline + L-aspartate + ATP = 2-(N(omega)-L-arginino)succinate + AMP + diphosphate + H(+)</text>
        <dbReference type="Rhea" id="RHEA:10932"/>
        <dbReference type="ChEBI" id="CHEBI:15378"/>
        <dbReference type="ChEBI" id="CHEBI:29991"/>
        <dbReference type="ChEBI" id="CHEBI:30616"/>
        <dbReference type="ChEBI" id="CHEBI:33019"/>
        <dbReference type="ChEBI" id="CHEBI:57472"/>
        <dbReference type="ChEBI" id="CHEBI:57743"/>
        <dbReference type="ChEBI" id="CHEBI:456215"/>
        <dbReference type="EC" id="6.3.4.5"/>
    </reaction>
</comment>
<comment type="pathway">
    <text evidence="1">Amino-acid biosynthesis; L-arginine biosynthesis; L-arginine from L-ornithine and carbamoyl phosphate: step 2/3.</text>
</comment>
<comment type="subunit">
    <text evidence="1">Homotetramer.</text>
</comment>
<comment type="subcellular location">
    <subcellularLocation>
        <location evidence="1">Cytoplasm</location>
    </subcellularLocation>
</comment>
<comment type="similarity">
    <text evidence="1">Belongs to the argininosuccinate synthase family. Type 1 subfamily.</text>
</comment>
<organism>
    <name type="scientific">Aromatoleum aromaticum (strain DSM 19018 / LMG 30748 / EbN1)</name>
    <name type="common">Azoarcus sp. (strain EbN1)</name>
    <dbReference type="NCBI Taxonomy" id="76114"/>
    <lineage>
        <taxon>Bacteria</taxon>
        <taxon>Pseudomonadati</taxon>
        <taxon>Pseudomonadota</taxon>
        <taxon>Betaproteobacteria</taxon>
        <taxon>Rhodocyclales</taxon>
        <taxon>Rhodocyclaceae</taxon>
        <taxon>Aromatoleum</taxon>
    </lineage>
</organism>
<protein>
    <recommendedName>
        <fullName evidence="1">Argininosuccinate synthase</fullName>
        <ecNumber evidence="1">6.3.4.5</ecNumber>
    </recommendedName>
    <alternativeName>
        <fullName evidence="1">Citrulline--aspartate ligase</fullName>
    </alternativeName>
</protein>
<accession>Q5P0Z7</accession>
<evidence type="ECO:0000255" key="1">
    <source>
        <dbReference type="HAMAP-Rule" id="MF_00005"/>
    </source>
</evidence>
<reference key="1">
    <citation type="journal article" date="2005" name="Arch. Microbiol.">
        <title>The genome sequence of an anaerobic aromatic-degrading denitrifying bacterium, strain EbN1.</title>
        <authorList>
            <person name="Rabus R."/>
            <person name="Kube M."/>
            <person name="Heider J."/>
            <person name="Beck A."/>
            <person name="Heitmann K."/>
            <person name="Widdel F."/>
            <person name="Reinhardt R."/>
        </authorList>
    </citation>
    <scope>NUCLEOTIDE SEQUENCE [LARGE SCALE GENOMIC DNA]</scope>
    <source>
        <strain>DSM 19018 / LMG 30748 / EbN1</strain>
    </source>
</reference>
<proteinExistence type="inferred from homology"/>
<keyword id="KW-0028">Amino-acid biosynthesis</keyword>
<keyword id="KW-0055">Arginine biosynthesis</keyword>
<keyword id="KW-0067">ATP-binding</keyword>
<keyword id="KW-0963">Cytoplasm</keyword>
<keyword id="KW-0436">Ligase</keyword>
<keyword id="KW-0547">Nucleotide-binding</keyword>
<keyword id="KW-1185">Reference proteome</keyword>